<evidence type="ECO:0000250" key="1">
    <source>
        <dbReference type="UniProtKB" id="Q9SU05"/>
    </source>
</evidence>
<evidence type="ECO:0000255" key="2"/>
<evidence type="ECO:0000269" key="3">
    <source>
    </source>
</evidence>
<evidence type="ECO:0000303" key="4">
    <source>
    </source>
</evidence>
<evidence type="ECO:0000312" key="5">
    <source>
        <dbReference type="Araport" id="AT3G03730"/>
    </source>
</evidence>
<evidence type="ECO:0000312" key="6">
    <source>
        <dbReference type="EMBL" id="AAF00644.1"/>
    </source>
</evidence>
<name>KIB4_ARATH</name>
<keyword id="KW-1070">Brassinosteroid signaling pathway</keyword>
<keyword id="KW-0963">Cytoplasm</keyword>
<keyword id="KW-0539">Nucleus</keyword>
<keyword id="KW-1185">Reference proteome</keyword>
<keyword id="KW-0833">Ubl conjugation pathway</keyword>
<feature type="chain" id="PRO_0000283405" description="F-box protein KIB4">
    <location>
        <begin position="1"/>
        <end position="393"/>
    </location>
</feature>
<feature type="domain" description="F-box" evidence="2">
    <location>
        <begin position="12"/>
        <end position="59"/>
    </location>
</feature>
<dbReference type="EMBL" id="AC009540">
    <property type="protein sequence ID" value="AAF00644.1"/>
    <property type="molecule type" value="Genomic_DNA"/>
</dbReference>
<dbReference type="EMBL" id="CP002686">
    <property type="protein sequence ID" value="AEE73979.1"/>
    <property type="molecule type" value="Genomic_DNA"/>
</dbReference>
<dbReference type="RefSeq" id="NP_187023.1">
    <property type="nucleotide sequence ID" value="NM_111244.1"/>
</dbReference>
<dbReference type="FunCoup" id="Q9SRV0">
    <property type="interactions" value="35"/>
</dbReference>
<dbReference type="PaxDb" id="3702-AT3G03730.1"/>
<dbReference type="EnsemblPlants" id="AT3G03730.1">
    <property type="protein sequence ID" value="AT3G03730.1"/>
    <property type="gene ID" value="AT3G03730"/>
</dbReference>
<dbReference type="GeneID" id="821173"/>
<dbReference type="Gramene" id="AT3G03730.1">
    <property type="protein sequence ID" value="AT3G03730.1"/>
    <property type="gene ID" value="AT3G03730"/>
</dbReference>
<dbReference type="KEGG" id="ath:AT3G03730"/>
<dbReference type="Araport" id="AT3G03730"/>
<dbReference type="TAIR" id="AT3G03730">
    <property type="gene designation" value="KIB4"/>
</dbReference>
<dbReference type="eggNOG" id="ENOG502S0MJ">
    <property type="taxonomic scope" value="Eukaryota"/>
</dbReference>
<dbReference type="HOGENOM" id="CLU_019286_7_1_1"/>
<dbReference type="InParanoid" id="Q9SRV0"/>
<dbReference type="OMA" id="NSWFLML"/>
<dbReference type="PhylomeDB" id="Q9SRV0"/>
<dbReference type="PRO" id="PR:Q9SRV0"/>
<dbReference type="Proteomes" id="UP000006548">
    <property type="component" value="Chromosome 3"/>
</dbReference>
<dbReference type="ExpressionAtlas" id="Q9SRV0">
    <property type="expression patterns" value="baseline"/>
</dbReference>
<dbReference type="GO" id="GO:0005737">
    <property type="term" value="C:cytoplasm"/>
    <property type="evidence" value="ECO:0000250"/>
    <property type="project" value="UniProtKB"/>
</dbReference>
<dbReference type="GO" id="GO:0005730">
    <property type="term" value="C:nucleolus"/>
    <property type="evidence" value="ECO:0000250"/>
    <property type="project" value="UniProtKB"/>
</dbReference>
<dbReference type="GO" id="GO:0009742">
    <property type="term" value="P:brassinosteroid mediated signaling pathway"/>
    <property type="evidence" value="ECO:0000316"/>
    <property type="project" value="TAIR"/>
</dbReference>
<dbReference type="GO" id="GO:1900459">
    <property type="term" value="P:positive regulation of brassinosteroid mediated signaling pathway"/>
    <property type="evidence" value="ECO:0000315"/>
    <property type="project" value="UniProtKB"/>
</dbReference>
<dbReference type="GO" id="GO:0006511">
    <property type="term" value="P:ubiquitin-dependent protein catabolic process"/>
    <property type="evidence" value="ECO:0000314"/>
    <property type="project" value="UniProtKB"/>
</dbReference>
<dbReference type="InterPro" id="IPR050942">
    <property type="entry name" value="F-box_BR-signaling"/>
</dbReference>
<dbReference type="InterPro" id="IPR001810">
    <property type="entry name" value="F-box_dom"/>
</dbReference>
<dbReference type="InterPro" id="IPR005174">
    <property type="entry name" value="KIB1-4_b-propeller"/>
</dbReference>
<dbReference type="PANTHER" id="PTHR44259:SF15">
    <property type="entry name" value="F-BOX PROTEIN KIB2-RELATED"/>
    <property type="match status" value="1"/>
</dbReference>
<dbReference type="PANTHER" id="PTHR44259">
    <property type="entry name" value="OS07G0183000 PROTEIN-RELATED"/>
    <property type="match status" value="1"/>
</dbReference>
<dbReference type="Pfam" id="PF03478">
    <property type="entry name" value="Beta-prop_KIB1-4"/>
    <property type="match status" value="1"/>
</dbReference>
<dbReference type="Pfam" id="PF00646">
    <property type="entry name" value="F-box"/>
    <property type="match status" value="1"/>
</dbReference>
<dbReference type="SUPFAM" id="SSF75011">
    <property type="entry name" value="3-carboxy-cis,cis-mucoante lactonizing enzyme"/>
    <property type="match status" value="1"/>
</dbReference>
<gene>
    <name evidence="4" type="primary">KIB4</name>
    <name evidence="5" type="ordered locus">At3g03730</name>
    <name evidence="6" type="ORF">F20H23.24</name>
</gene>
<organism>
    <name type="scientific">Arabidopsis thaliana</name>
    <name type="common">Mouse-ear cress</name>
    <dbReference type="NCBI Taxonomy" id="3702"/>
    <lineage>
        <taxon>Eukaryota</taxon>
        <taxon>Viridiplantae</taxon>
        <taxon>Streptophyta</taxon>
        <taxon>Embryophyta</taxon>
        <taxon>Tracheophyta</taxon>
        <taxon>Spermatophyta</taxon>
        <taxon>Magnoliopsida</taxon>
        <taxon>eudicotyledons</taxon>
        <taxon>Gunneridae</taxon>
        <taxon>Pentapetalae</taxon>
        <taxon>rosids</taxon>
        <taxon>malvids</taxon>
        <taxon>Brassicales</taxon>
        <taxon>Brassicaceae</taxon>
        <taxon>Camelineae</taxon>
        <taxon>Arabidopsis</taxon>
    </lineage>
</organism>
<proteinExistence type="inferred from homology"/>
<accession>Q9SRV0</accession>
<comment type="function">
    <text evidence="3">Component of SCF(ASK-cullin-F-box) E3 ubiquitin ligase complexes, which may mediate the ubiquitination and subsequent proteasomal degradation of target proteins. Required for brassinosteroid (BR) signal transduction. Mediates ASK7/BIN2/SK21 inactivation both by competing with substrate binding (e.g. BZR1) and by promoting its ubiquitination and subsequent proteasomal degradation.</text>
</comment>
<comment type="subcellular location">
    <subcellularLocation>
        <location evidence="1">Cytoplasm</location>
    </subcellularLocation>
    <subcellularLocation>
        <location evidence="1">Nucleus</location>
        <location evidence="1">Nucleolus</location>
    </subcellularLocation>
</comment>
<comment type="disruption phenotype">
    <text evidence="3">Abolished brassinosteroid (BR)-induced ASK7/BIN2/SK21 degradation, and BR-insensitivity. Suppression of the constitutive BR-response phenotype in the dominant mutant bzr1-1D, and accumulation of phosphorylated BZR1.</text>
</comment>
<reference key="1">
    <citation type="journal article" date="2000" name="Nature">
        <title>Sequence and analysis of chromosome 3 of the plant Arabidopsis thaliana.</title>
        <authorList>
            <person name="Salanoubat M."/>
            <person name="Lemcke K."/>
            <person name="Rieger M."/>
            <person name="Ansorge W."/>
            <person name="Unseld M."/>
            <person name="Fartmann B."/>
            <person name="Valle G."/>
            <person name="Bloecker H."/>
            <person name="Perez-Alonso M."/>
            <person name="Obermaier B."/>
            <person name="Delseny M."/>
            <person name="Boutry M."/>
            <person name="Grivell L.A."/>
            <person name="Mache R."/>
            <person name="Puigdomenech P."/>
            <person name="De Simone V."/>
            <person name="Choisne N."/>
            <person name="Artiguenave F."/>
            <person name="Robert C."/>
            <person name="Brottier P."/>
            <person name="Wincker P."/>
            <person name="Cattolico L."/>
            <person name="Weissenbach J."/>
            <person name="Saurin W."/>
            <person name="Quetier F."/>
            <person name="Schaefer M."/>
            <person name="Mueller-Auer S."/>
            <person name="Gabel C."/>
            <person name="Fuchs M."/>
            <person name="Benes V."/>
            <person name="Wurmbach E."/>
            <person name="Drzonek H."/>
            <person name="Erfle H."/>
            <person name="Jordan N."/>
            <person name="Bangert S."/>
            <person name="Wiedelmann R."/>
            <person name="Kranz H."/>
            <person name="Voss H."/>
            <person name="Holland R."/>
            <person name="Brandt P."/>
            <person name="Nyakatura G."/>
            <person name="Vezzi A."/>
            <person name="D'Angelo M."/>
            <person name="Pallavicini A."/>
            <person name="Toppo S."/>
            <person name="Simionati B."/>
            <person name="Conrad A."/>
            <person name="Hornischer K."/>
            <person name="Kauer G."/>
            <person name="Loehnert T.-H."/>
            <person name="Nordsiek G."/>
            <person name="Reichelt J."/>
            <person name="Scharfe M."/>
            <person name="Schoen O."/>
            <person name="Bargues M."/>
            <person name="Terol J."/>
            <person name="Climent J."/>
            <person name="Navarro P."/>
            <person name="Collado C."/>
            <person name="Perez-Perez A."/>
            <person name="Ottenwaelder B."/>
            <person name="Duchemin D."/>
            <person name="Cooke R."/>
            <person name="Laudie M."/>
            <person name="Berger-Llauro C."/>
            <person name="Purnelle B."/>
            <person name="Masuy D."/>
            <person name="de Haan M."/>
            <person name="Maarse A.C."/>
            <person name="Alcaraz J.-P."/>
            <person name="Cottet A."/>
            <person name="Casacuberta E."/>
            <person name="Monfort A."/>
            <person name="Argiriou A."/>
            <person name="Flores M."/>
            <person name="Liguori R."/>
            <person name="Vitale D."/>
            <person name="Mannhaupt G."/>
            <person name="Haase D."/>
            <person name="Schoof H."/>
            <person name="Rudd S."/>
            <person name="Zaccaria P."/>
            <person name="Mewes H.-W."/>
            <person name="Mayer K.F.X."/>
            <person name="Kaul S."/>
            <person name="Town C.D."/>
            <person name="Koo H.L."/>
            <person name="Tallon L.J."/>
            <person name="Jenkins J."/>
            <person name="Rooney T."/>
            <person name="Rizzo M."/>
            <person name="Walts A."/>
            <person name="Utterback T."/>
            <person name="Fujii C.Y."/>
            <person name="Shea T.P."/>
            <person name="Creasy T.H."/>
            <person name="Haas B."/>
            <person name="Maiti R."/>
            <person name="Wu D."/>
            <person name="Peterson J."/>
            <person name="Van Aken S."/>
            <person name="Pai G."/>
            <person name="Militscher J."/>
            <person name="Sellers P."/>
            <person name="Gill J.E."/>
            <person name="Feldblyum T.V."/>
            <person name="Preuss D."/>
            <person name="Lin X."/>
            <person name="Nierman W.C."/>
            <person name="Salzberg S.L."/>
            <person name="White O."/>
            <person name="Venter J.C."/>
            <person name="Fraser C.M."/>
            <person name="Kaneko T."/>
            <person name="Nakamura Y."/>
            <person name="Sato S."/>
            <person name="Kato T."/>
            <person name="Asamizu E."/>
            <person name="Sasamoto S."/>
            <person name="Kimura T."/>
            <person name="Idesawa K."/>
            <person name="Kawashima K."/>
            <person name="Kishida Y."/>
            <person name="Kiyokawa C."/>
            <person name="Kohara M."/>
            <person name="Matsumoto M."/>
            <person name="Matsuno A."/>
            <person name="Muraki A."/>
            <person name="Nakayama S."/>
            <person name="Nakazaki N."/>
            <person name="Shinpo S."/>
            <person name="Takeuchi C."/>
            <person name="Wada T."/>
            <person name="Watanabe A."/>
            <person name="Yamada M."/>
            <person name="Yasuda M."/>
            <person name="Tabata S."/>
        </authorList>
    </citation>
    <scope>NUCLEOTIDE SEQUENCE [LARGE SCALE GENOMIC DNA]</scope>
    <source>
        <strain>cv. Columbia</strain>
    </source>
</reference>
<reference key="2">
    <citation type="journal article" date="2017" name="Plant J.">
        <title>Araport11: a complete reannotation of the Arabidopsis thaliana reference genome.</title>
        <authorList>
            <person name="Cheng C.Y."/>
            <person name="Krishnakumar V."/>
            <person name="Chan A.P."/>
            <person name="Thibaud-Nissen F."/>
            <person name="Schobel S."/>
            <person name="Town C.D."/>
        </authorList>
    </citation>
    <scope>GENOME REANNOTATION</scope>
    <source>
        <strain>cv. Columbia</strain>
    </source>
</reference>
<reference key="3">
    <citation type="journal article" date="2017" name="Mol. Cell">
        <title>The F-box protein KIB1 mediates brassinosteroid-induced inactivation and degradation of GSK3-like kinases in Arabidopsis.</title>
        <authorList>
            <person name="Zhu J.-Y."/>
            <person name="Li Y."/>
            <person name="Cao D.-M."/>
            <person name="Yang H."/>
            <person name="Oh E."/>
            <person name="Bi Y."/>
            <person name="Zhu S."/>
            <person name="Wang Z.-Y."/>
        </authorList>
    </citation>
    <scope>FUNCTION</scope>
    <scope>DISRUPTION PHENOTYPE</scope>
    <source>
        <strain>cv. Columbia</strain>
        <strain>cv. Wassilewskija</strain>
    </source>
</reference>
<protein>
    <recommendedName>
        <fullName evidence="4">F-box protein KIB4</fullName>
    </recommendedName>
    <alternativeName>
        <fullName evidence="4">Protein KINK SUPPRESSED IN BZR1-1D 4</fullName>
    </alternativeName>
</protein>
<sequence length="393" mass="44836">MSDSNKKTCNDAKQPILVLDLVRLVLERLSFVDFHRARCVSSVWYSASKSCIGGTNPTAPWIILFPNEHVKTNNDSCKSIDPRDHSSYTIRDLGFDMVRSRCLASSGSWFLMLDHKTDFHLLNLFTRERIPLPSLESIDGLQMKFVRTGDCGFEMSMYYKAHGLISYGKNSDLRISDAVLWVDEKNGDYFVVWFHHSTFAYHKKGGDNNSWKVFQPSKHQGCINMVFKEGKLYVLNPARNISVFDFSGGHSPVEYATPPSPNDDYYVRNLAVTLSGEVLIISSNPKKCFVKLYKIDPKSSEWRLIKSIGDEALILDLGITVAAKDGVMRNCIYFSHHELLRYKGVSLCNDDKYGICIYHIKTKKKVQEFEHLTTSSPILFKDARWFFPTFGGN</sequence>